<name>GPSB_STRA1</name>
<sequence length="110" mass="13016">MASIIYSPKDIFEQDFKVSMRGYDKKEVDVFLDDVIKDYENYLEQIEKLQMENRRLQQALDKKESEASNVRNSGTAMYNQKPIAQSATNFDILKRISRLEKEVFGRQIRE</sequence>
<dbReference type="EMBL" id="CP000114">
    <property type="protein sequence ID" value="ABA45968.1"/>
    <property type="molecule type" value="Genomic_DNA"/>
</dbReference>
<dbReference type="RefSeq" id="WP_000146544.1">
    <property type="nucleotide sequence ID" value="NC_007432.1"/>
</dbReference>
<dbReference type="SMR" id="Q3K378"/>
<dbReference type="GeneID" id="66885274"/>
<dbReference type="KEGG" id="sak:SAK_0373"/>
<dbReference type="HOGENOM" id="CLU_140309_1_0_9"/>
<dbReference type="GO" id="GO:0005737">
    <property type="term" value="C:cytoplasm"/>
    <property type="evidence" value="ECO:0007669"/>
    <property type="project" value="UniProtKB-SubCell"/>
</dbReference>
<dbReference type="GO" id="GO:0051301">
    <property type="term" value="P:cell division"/>
    <property type="evidence" value="ECO:0007669"/>
    <property type="project" value="UniProtKB-UniRule"/>
</dbReference>
<dbReference type="GO" id="GO:0008360">
    <property type="term" value="P:regulation of cell shape"/>
    <property type="evidence" value="ECO:0007669"/>
    <property type="project" value="UniProtKB-UniRule"/>
</dbReference>
<dbReference type="Gene3D" id="6.10.250.660">
    <property type="match status" value="1"/>
</dbReference>
<dbReference type="HAMAP" id="MF_02011">
    <property type="entry name" value="GpsB"/>
    <property type="match status" value="1"/>
</dbReference>
<dbReference type="InterPro" id="IPR011229">
    <property type="entry name" value="Cell_cycle_GpsB"/>
</dbReference>
<dbReference type="InterPro" id="IPR019933">
    <property type="entry name" value="DivIVA_domain"/>
</dbReference>
<dbReference type="InterPro" id="IPR007793">
    <property type="entry name" value="DivIVA_fam"/>
</dbReference>
<dbReference type="NCBIfam" id="TIGR03544">
    <property type="entry name" value="DivI1A_domain"/>
    <property type="match status" value="1"/>
</dbReference>
<dbReference type="NCBIfam" id="NF010725">
    <property type="entry name" value="PRK14127.1"/>
    <property type="match status" value="1"/>
</dbReference>
<dbReference type="PANTHER" id="PTHR35794:SF1">
    <property type="entry name" value="CELL CYCLE PROTEIN GPSB"/>
    <property type="match status" value="1"/>
</dbReference>
<dbReference type="PANTHER" id="PTHR35794">
    <property type="entry name" value="CELL DIVISION PROTEIN DIVIVA"/>
    <property type="match status" value="1"/>
</dbReference>
<dbReference type="Pfam" id="PF05103">
    <property type="entry name" value="DivIVA"/>
    <property type="match status" value="1"/>
</dbReference>
<dbReference type="PIRSF" id="PIRSF029938">
    <property type="entry name" value="UCP029938"/>
    <property type="match status" value="1"/>
</dbReference>
<protein>
    <recommendedName>
        <fullName evidence="1">Cell cycle protein GpsB</fullName>
    </recommendedName>
    <alternativeName>
        <fullName evidence="1">Guiding PBP1-shuttling protein</fullName>
    </alternativeName>
</protein>
<keyword id="KW-0131">Cell cycle</keyword>
<keyword id="KW-0132">Cell division</keyword>
<keyword id="KW-0133">Cell shape</keyword>
<keyword id="KW-0175">Coiled coil</keyword>
<keyword id="KW-0963">Cytoplasm</keyword>
<proteinExistence type="inferred from homology"/>
<comment type="function">
    <text evidence="1">Divisome component that associates with the complex late in its assembly, after the Z-ring is formed, and is dependent on DivIC and PBP2B for its recruitment to the divisome. Together with EzrA, is a key component of the system that regulates PBP1 localization during cell cycle progression. Its main role could be the removal of PBP1 from the cell pole after pole maturation is completed. Also contributes to the recruitment of PBP1 to the division complex. Not essential for septum formation.</text>
</comment>
<comment type="subunit">
    <text evidence="1">Forms polymers through the coiled coil domains. Interacts with PBP1, MreC and EzrA.</text>
</comment>
<comment type="subcellular location">
    <subcellularLocation>
        <location evidence="1">Cytoplasm</location>
    </subcellularLocation>
    <text evidence="1">Shuttles between the lateral wall and the division site in a cell cycle-dependent manner.</text>
</comment>
<comment type="similarity">
    <text evidence="1">Belongs to the GpsB family.</text>
</comment>
<evidence type="ECO:0000255" key="1">
    <source>
        <dbReference type="HAMAP-Rule" id="MF_02011"/>
    </source>
</evidence>
<gene>
    <name evidence="1" type="primary">gpsB</name>
    <name type="ordered locus">SAK_0373</name>
</gene>
<feature type="chain" id="PRO_0000337948" description="Cell cycle protein GpsB">
    <location>
        <begin position="1"/>
        <end position="110"/>
    </location>
</feature>
<feature type="coiled-coil region" evidence="1">
    <location>
        <begin position="32"/>
        <end position="73"/>
    </location>
</feature>
<organism>
    <name type="scientific">Streptococcus agalactiae serotype Ia (strain ATCC 27591 / A909 / CDC SS700)</name>
    <dbReference type="NCBI Taxonomy" id="205921"/>
    <lineage>
        <taxon>Bacteria</taxon>
        <taxon>Bacillati</taxon>
        <taxon>Bacillota</taxon>
        <taxon>Bacilli</taxon>
        <taxon>Lactobacillales</taxon>
        <taxon>Streptococcaceae</taxon>
        <taxon>Streptococcus</taxon>
    </lineage>
</organism>
<accession>Q3K378</accession>
<reference key="1">
    <citation type="journal article" date="2005" name="Proc. Natl. Acad. Sci. U.S.A.">
        <title>Genome analysis of multiple pathogenic isolates of Streptococcus agalactiae: implications for the microbial 'pan-genome'.</title>
        <authorList>
            <person name="Tettelin H."/>
            <person name="Masignani V."/>
            <person name="Cieslewicz M.J."/>
            <person name="Donati C."/>
            <person name="Medini D."/>
            <person name="Ward N.L."/>
            <person name="Angiuoli S.V."/>
            <person name="Crabtree J."/>
            <person name="Jones A.L."/>
            <person name="Durkin A.S."/>
            <person name="DeBoy R.T."/>
            <person name="Davidsen T.M."/>
            <person name="Mora M."/>
            <person name="Scarselli M."/>
            <person name="Margarit y Ros I."/>
            <person name="Peterson J.D."/>
            <person name="Hauser C.R."/>
            <person name="Sundaram J.P."/>
            <person name="Nelson W.C."/>
            <person name="Madupu R."/>
            <person name="Brinkac L.M."/>
            <person name="Dodson R.J."/>
            <person name="Rosovitz M.J."/>
            <person name="Sullivan S.A."/>
            <person name="Daugherty S.C."/>
            <person name="Haft D.H."/>
            <person name="Selengut J."/>
            <person name="Gwinn M.L."/>
            <person name="Zhou L."/>
            <person name="Zafar N."/>
            <person name="Khouri H."/>
            <person name="Radune D."/>
            <person name="Dimitrov G."/>
            <person name="Watkins K."/>
            <person name="O'Connor K.J."/>
            <person name="Smith S."/>
            <person name="Utterback T.R."/>
            <person name="White O."/>
            <person name="Rubens C.E."/>
            <person name="Grandi G."/>
            <person name="Madoff L.C."/>
            <person name="Kasper D.L."/>
            <person name="Telford J.L."/>
            <person name="Wessels M.R."/>
            <person name="Rappuoli R."/>
            <person name="Fraser C.M."/>
        </authorList>
    </citation>
    <scope>NUCLEOTIDE SEQUENCE [LARGE SCALE GENOMIC DNA]</scope>
    <source>
        <strain>ATCC 27591 / A909 / CDC SS700</strain>
    </source>
</reference>